<name>PYRE_HELPG</name>
<evidence type="ECO:0000255" key="1">
    <source>
        <dbReference type="HAMAP-Rule" id="MF_01208"/>
    </source>
</evidence>
<proteinExistence type="inferred from homology"/>
<comment type="function">
    <text evidence="1">Catalyzes the transfer of a ribosyl phosphate group from 5-phosphoribose 1-diphosphate to orotate, leading to the formation of orotidine monophosphate (OMP).</text>
</comment>
<comment type="catalytic activity">
    <reaction evidence="1">
        <text>orotidine 5'-phosphate + diphosphate = orotate + 5-phospho-alpha-D-ribose 1-diphosphate</text>
        <dbReference type="Rhea" id="RHEA:10380"/>
        <dbReference type="ChEBI" id="CHEBI:30839"/>
        <dbReference type="ChEBI" id="CHEBI:33019"/>
        <dbReference type="ChEBI" id="CHEBI:57538"/>
        <dbReference type="ChEBI" id="CHEBI:58017"/>
        <dbReference type="EC" id="2.4.2.10"/>
    </reaction>
</comment>
<comment type="cofactor">
    <cofactor evidence="1">
        <name>Mg(2+)</name>
        <dbReference type="ChEBI" id="CHEBI:18420"/>
    </cofactor>
</comment>
<comment type="pathway">
    <text evidence="1">Pyrimidine metabolism; UMP biosynthesis via de novo pathway; UMP from orotate: step 1/2.</text>
</comment>
<comment type="subunit">
    <text evidence="1">Homodimer.</text>
</comment>
<comment type="similarity">
    <text evidence="1">Belongs to the purine/pyrimidine phosphoribosyltransferase family. PyrE subfamily.</text>
</comment>
<accession>B5Z8Q2</accession>
<dbReference type="EC" id="2.4.2.10" evidence="1"/>
<dbReference type="EMBL" id="CP001173">
    <property type="protein sequence ID" value="ACI27951.1"/>
    <property type="molecule type" value="Genomic_DNA"/>
</dbReference>
<dbReference type="RefSeq" id="WP_000351560.1">
    <property type="nucleotide sequence ID" value="NC_011333.1"/>
</dbReference>
<dbReference type="SMR" id="B5Z8Q2"/>
<dbReference type="KEGG" id="hpg:HPG27_1202"/>
<dbReference type="HOGENOM" id="CLU_074878_3_0_7"/>
<dbReference type="UniPathway" id="UPA00070">
    <property type="reaction ID" value="UER00119"/>
</dbReference>
<dbReference type="Proteomes" id="UP000001735">
    <property type="component" value="Chromosome"/>
</dbReference>
<dbReference type="GO" id="GO:0000287">
    <property type="term" value="F:magnesium ion binding"/>
    <property type="evidence" value="ECO:0007669"/>
    <property type="project" value="UniProtKB-UniRule"/>
</dbReference>
<dbReference type="GO" id="GO:0004588">
    <property type="term" value="F:orotate phosphoribosyltransferase activity"/>
    <property type="evidence" value="ECO:0007669"/>
    <property type="project" value="UniProtKB-UniRule"/>
</dbReference>
<dbReference type="GO" id="GO:0044205">
    <property type="term" value="P:'de novo' UMP biosynthetic process"/>
    <property type="evidence" value="ECO:0007669"/>
    <property type="project" value="UniProtKB-UniRule"/>
</dbReference>
<dbReference type="GO" id="GO:0019856">
    <property type="term" value="P:pyrimidine nucleobase biosynthetic process"/>
    <property type="evidence" value="ECO:0007669"/>
    <property type="project" value="InterPro"/>
</dbReference>
<dbReference type="CDD" id="cd06223">
    <property type="entry name" value="PRTases_typeI"/>
    <property type="match status" value="1"/>
</dbReference>
<dbReference type="Gene3D" id="3.40.50.2020">
    <property type="match status" value="1"/>
</dbReference>
<dbReference type="HAMAP" id="MF_01208">
    <property type="entry name" value="PyrE"/>
    <property type="match status" value="1"/>
</dbReference>
<dbReference type="InterPro" id="IPR023031">
    <property type="entry name" value="OPRT"/>
</dbReference>
<dbReference type="InterPro" id="IPR006273">
    <property type="entry name" value="Orotate_PRibTrfase_bac"/>
</dbReference>
<dbReference type="InterPro" id="IPR000836">
    <property type="entry name" value="PRibTrfase_dom"/>
</dbReference>
<dbReference type="InterPro" id="IPR029057">
    <property type="entry name" value="PRTase-like"/>
</dbReference>
<dbReference type="NCBIfam" id="TIGR01367">
    <property type="entry name" value="pyrE_Therm"/>
    <property type="match status" value="1"/>
</dbReference>
<dbReference type="PANTHER" id="PTHR19278">
    <property type="entry name" value="OROTATE PHOSPHORIBOSYLTRANSFERASE"/>
    <property type="match status" value="1"/>
</dbReference>
<dbReference type="PANTHER" id="PTHR19278:SF9">
    <property type="entry name" value="URIDINE 5'-MONOPHOSPHATE SYNTHASE"/>
    <property type="match status" value="1"/>
</dbReference>
<dbReference type="Pfam" id="PF00156">
    <property type="entry name" value="Pribosyltran"/>
    <property type="match status" value="1"/>
</dbReference>
<dbReference type="SUPFAM" id="SSF53271">
    <property type="entry name" value="PRTase-like"/>
    <property type="match status" value="1"/>
</dbReference>
<dbReference type="PROSITE" id="PS00103">
    <property type="entry name" value="PUR_PYR_PR_TRANSFER"/>
    <property type="match status" value="1"/>
</dbReference>
<sequence length="201" mass="21964">MDIKACYQNAKALLEGHFLLSSGFHSNYYLQSAKVLEDPKLAEQLALELAKQIQEAHLNIECVCSPAIGGILAGYELARALGVRFIFTERVDNTMTLRRGFEVKKNEKILVCEDIITTGKSAMECAKVLEEKGAQIVAFGALANRGICKRTHSHLKAQEGACLPSHLPLFALEDFVFDMHKPSSCPLCATSVAIKPGSRGN</sequence>
<keyword id="KW-0328">Glycosyltransferase</keyword>
<keyword id="KW-0460">Magnesium</keyword>
<keyword id="KW-0665">Pyrimidine biosynthesis</keyword>
<keyword id="KW-1185">Reference proteome</keyword>
<keyword id="KW-0808">Transferase</keyword>
<organism>
    <name type="scientific">Helicobacter pylori (strain G27)</name>
    <dbReference type="NCBI Taxonomy" id="563041"/>
    <lineage>
        <taxon>Bacteria</taxon>
        <taxon>Pseudomonadati</taxon>
        <taxon>Campylobacterota</taxon>
        <taxon>Epsilonproteobacteria</taxon>
        <taxon>Campylobacterales</taxon>
        <taxon>Helicobacteraceae</taxon>
        <taxon>Helicobacter</taxon>
    </lineage>
</organism>
<gene>
    <name evidence="1" type="primary">pyrE</name>
    <name type="ordered locus">HPG27_1202</name>
</gene>
<protein>
    <recommendedName>
        <fullName evidence="1">Orotate phosphoribosyltransferase</fullName>
        <shortName evidence="1">OPRT</shortName>
        <shortName evidence="1">OPRTase</shortName>
        <ecNumber evidence="1">2.4.2.10</ecNumber>
    </recommendedName>
</protein>
<feature type="chain" id="PRO_1000138797" description="Orotate phosphoribosyltransferase">
    <location>
        <begin position="1"/>
        <end position="201"/>
    </location>
</feature>
<feature type="binding site" evidence="1">
    <location>
        <begin position="113"/>
        <end position="121"/>
    </location>
    <ligand>
        <name>5-phospho-alpha-D-ribose 1-diphosphate</name>
        <dbReference type="ChEBI" id="CHEBI:58017"/>
    </ligand>
</feature>
<feature type="binding site" evidence="1">
    <location>
        <position position="117"/>
    </location>
    <ligand>
        <name>orotate</name>
        <dbReference type="ChEBI" id="CHEBI:30839"/>
    </ligand>
</feature>
<feature type="binding site" evidence="1">
    <location>
        <position position="145"/>
    </location>
    <ligand>
        <name>orotate</name>
        <dbReference type="ChEBI" id="CHEBI:30839"/>
    </ligand>
</feature>
<reference key="1">
    <citation type="journal article" date="2009" name="J. Bacteriol.">
        <title>The complete genome sequence of Helicobacter pylori strain G27.</title>
        <authorList>
            <person name="Baltrus D.A."/>
            <person name="Amieva M.R."/>
            <person name="Covacci A."/>
            <person name="Lowe T.M."/>
            <person name="Merrell D.S."/>
            <person name="Ottemann K.M."/>
            <person name="Stein M."/>
            <person name="Salama N.R."/>
            <person name="Guillemin K."/>
        </authorList>
    </citation>
    <scope>NUCLEOTIDE SEQUENCE [LARGE SCALE GENOMIC DNA]</scope>
    <source>
        <strain>G27</strain>
    </source>
</reference>